<gene>
    <name evidence="2" type="primary">vma-6</name>
    <name type="ORF">B19C19.060</name>
    <name type="ORF">NCU03395</name>
</gene>
<organism>
    <name type="scientific">Neurospora crassa (strain ATCC 24698 / 74-OR23-1A / CBS 708.71 / DSM 1257 / FGSC 987)</name>
    <dbReference type="NCBI Taxonomy" id="367110"/>
    <lineage>
        <taxon>Eukaryota</taxon>
        <taxon>Fungi</taxon>
        <taxon>Dikarya</taxon>
        <taxon>Ascomycota</taxon>
        <taxon>Pezizomycotina</taxon>
        <taxon>Sordariomycetes</taxon>
        <taxon>Sordariomycetidae</taxon>
        <taxon>Sordariales</taxon>
        <taxon>Sordariaceae</taxon>
        <taxon>Neurospora</taxon>
    </lineage>
</organism>
<evidence type="ECO:0000250" key="1">
    <source>
        <dbReference type="UniProtKB" id="P32366"/>
    </source>
</evidence>
<evidence type="ECO:0000303" key="2">
    <source>
    </source>
</evidence>
<evidence type="ECO:0000305" key="3"/>
<feature type="chain" id="PRO_0000119358" description="V-type proton ATPase subunit d">
    <location>
        <begin position="1"/>
        <end position="364"/>
    </location>
</feature>
<sequence length="364" mass="41008">MEGLLFNVNNGYIEGIVRGYRNSLLTSTNYTNMTQCESIDDLKLQLGPAYGDFLASLPPKPSTSALAAKTTDKLVSEFRYVRANAAGSLAKFMDYLTYGYMIDNVALLITGTLHERDTRELLERCHPLGWFETMPVLCVATNIEELYNSVMIETPLAPYFKSSLSLQDLDELNIEIVRNTLYKNYLEDFYHFVNTHPDMAGTPTAEVMSELLEFEADRRAINITLNSFGTELSKADRKKLYPNFGQLYPEGTLMLSRADDFEGVRLAVEGVADYKSFFDAAGLGGGPSGPGNMGGGGTEGKSLEDMFYQKEMEISKMAFTRQFTYAIVYAWVKLREQEIRNITWIAECIAQNQKERINNYISVF</sequence>
<accession>P53659</accession>
<accession>Q7RV58</accession>
<keyword id="KW-0375">Hydrogen ion transport</keyword>
<keyword id="KW-0406">Ion transport</keyword>
<keyword id="KW-0472">Membrane</keyword>
<keyword id="KW-1185">Reference proteome</keyword>
<keyword id="KW-0813">Transport</keyword>
<keyword id="KW-0926">Vacuole</keyword>
<dbReference type="EMBL" id="U36470">
    <property type="protein sequence ID" value="AAB02771.1"/>
    <property type="molecule type" value="Genomic_DNA"/>
</dbReference>
<dbReference type="EMBL" id="AL669992">
    <property type="protein sequence ID" value="CAD21144.1"/>
    <property type="molecule type" value="Genomic_DNA"/>
</dbReference>
<dbReference type="EMBL" id="CM002237">
    <property type="protein sequence ID" value="EAA27606.1"/>
    <property type="molecule type" value="Genomic_DNA"/>
</dbReference>
<dbReference type="PIR" id="T47198">
    <property type="entry name" value="T47198"/>
</dbReference>
<dbReference type="RefSeq" id="XP_956842.1">
    <property type="nucleotide sequence ID" value="XM_951749.2"/>
</dbReference>
<dbReference type="SMR" id="P53659"/>
<dbReference type="FunCoup" id="P53659">
    <property type="interactions" value="818"/>
</dbReference>
<dbReference type="STRING" id="367110.P53659"/>
<dbReference type="PaxDb" id="5141-EFNCRP00000002659"/>
<dbReference type="EnsemblFungi" id="EAA27606">
    <property type="protein sequence ID" value="EAA27606"/>
    <property type="gene ID" value="NCU03395"/>
</dbReference>
<dbReference type="GeneID" id="3872989"/>
<dbReference type="KEGG" id="ncr:NCU03395"/>
<dbReference type="VEuPathDB" id="FungiDB:NCU03395"/>
<dbReference type="HOGENOM" id="CLU_051277_0_0_1"/>
<dbReference type="InParanoid" id="P53659"/>
<dbReference type="OMA" id="MTYGYMI"/>
<dbReference type="OrthoDB" id="10250083at2759"/>
<dbReference type="Proteomes" id="UP000001805">
    <property type="component" value="Chromosome 6, Linkage Group II"/>
</dbReference>
<dbReference type="GO" id="GO:0000329">
    <property type="term" value="C:fungal-type vacuole membrane"/>
    <property type="evidence" value="ECO:0000318"/>
    <property type="project" value="GO_Central"/>
</dbReference>
<dbReference type="GO" id="GO:0016471">
    <property type="term" value="C:vacuolar proton-transporting V-type ATPase complex"/>
    <property type="evidence" value="ECO:0000318"/>
    <property type="project" value="GO_Central"/>
</dbReference>
<dbReference type="GO" id="GO:0000220">
    <property type="term" value="C:vacuolar proton-transporting V-type ATPase, V0 domain"/>
    <property type="evidence" value="ECO:0007669"/>
    <property type="project" value="EnsemblFungi"/>
</dbReference>
<dbReference type="GO" id="GO:0046961">
    <property type="term" value="F:proton-transporting ATPase activity, rotational mechanism"/>
    <property type="evidence" value="ECO:0007669"/>
    <property type="project" value="EnsemblFungi"/>
</dbReference>
<dbReference type="GO" id="GO:0007035">
    <property type="term" value="P:vacuolar acidification"/>
    <property type="evidence" value="ECO:0000318"/>
    <property type="project" value="GO_Central"/>
</dbReference>
<dbReference type="GO" id="GO:0007034">
    <property type="term" value="P:vacuolar transport"/>
    <property type="evidence" value="ECO:0000318"/>
    <property type="project" value="GO_Central"/>
</dbReference>
<dbReference type="FunFam" id="1.20.1690.10:FF:000001">
    <property type="entry name" value="V-type proton ATPase subunit"/>
    <property type="match status" value="1"/>
</dbReference>
<dbReference type="FunFam" id="1.20.1690.10:FF:000003">
    <property type="entry name" value="V-type proton ATPase subunit"/>
    <property type="match status" value="1"/>
</dbReference>
<dbReference type="Gene3D" id="1.10.132.50">
    <property type="entry name" value="ATP synthase (C/AC39) subunit, domain 3"/>
    <property type="match status" value="1"/>
</dbReference>
<dbReference type="Gene3D" id="1.20.1690.10">
    <property type="entry name" value="V-type ATP synthase subunit C domain"/>
    <property type="match status" value="2"/>
</dbReference>
<dbReference type="InterPro" id="IPR036079">
    <property type="entry name" value="ATPase_csu/dsu_sf"/>
</dbReference>
<dbReference type="InterPro" id="IPR002843">
    <property type="entry name" value="ATPase_V0-cplx_csu/dsu"/>
</dbReference>
<dbReference type="InterPro" id="IPR016727">
    <property type="entry name" value="ATPase_V0-cplx_dsu"/>
</dbReference>
<dbReference type="InterPro" id="IPR035067">
    <property type="entry name" value="V-type_ATPase_csu/dsu"/>
</dbReference>
<dbReference type="InterPro" id="IPR044911">
    <property type="entry name" value="V-type_ATPase_csu/dsu_dom_3"/>
</dbReference>
<dbReference type="PANTHER" id="PTHR11028">
    <property type="entry name" value="VACUOLAR ATP SYNTHASE SUBUNIT AC39"/>
    <property type="match status" value="1"/>
</dbReference>
<dbReference type="Pfam" id="PF01992">
    <property type="entry name" value="vATP-synt_AC39"/>
    <property type="match status" value="1"/>
</dbReference>
<dbReference type="PIRSF" id="PIRSF018497">
    <property type="entry name" value="V-ATP_synth_D"/>
    <property type="match status" value="1"/>
</dbReference>
<dbReference type="SUPFAM" id="SSF103486">
    <property type="entry name" value="V-type ATP synthase subunit C"/>
    <property type="match status" value="1"/>
</dbReference>
<proteinExistence type="inferred from homology"/>
<name>VA0D_NEUCR</name>
<comment type="function">
    <text evidence="1">Subunit of the V0 complex of vacuolar(H+)-ATPase (V-ATPase), a multisubunit enzyme composed of a peripheral complex (V1) that hydrolyzes ATP and a membrane integral complex (V0) that translocates protons (By similarity). V-ATPase is responsible for acidifying and maintaining the pH of intracellular compartments (By similarity). This subunit is a non-integral membrane component of the membrane pore domain and is required for proper assembly of the V0 sector (By similarity). Might be involved in the regulated assembly of V1 subunits onto the membrane sector or alternatively may prevent the passage of protons through V0 pores (By similarity).</text>
</comment>
<comment type="subunit">
    <text evidence="1">V-ATPase is a heteromultimeric enzyme composed of a peripheral catalytic V1 complex (components A to H) attached to an integral membrane V0 proton pore complex (components: a, c, c', c'', d, e, f and VOA1).</text>
</comment>
<comment type="subcellular location">
    <subcellularLocation>
        <location evidence="1">Vacuole membrane</location>
        <topology evidence="1">Peripheral membrane protein</topology>
    </subcellularLocation>
</comment>
<comment type="similarity">
    <text evidence="3">Belongs to the V-ATPase V0D/AC39 subunit family.</text>
</comment>
<reference key="1">
    <citation type="journal article" date="1996" name="Biochim. Biophys. Acta">
        <title>Isolation of the vma-6 gene encoding a 41 kDa subunit of the Neurospora crassa vacuolar ATPase, and an adjoining gene encoding a ribosome-associated protein.</title>
        <authorList>
            <person name="Melnik V.I."/>
            <person name="Bowman B.J."/>
        </authorList>
    </citation>
    <scope>NUCLEOTIDE SEQUENCE [GENOMIC DNA]</scope>
</reference>
<reference key="2">
    <citation type="journal article" date="2003" name="Nucleic Acids Res.">
        <title>What's in the genome of a filamentous fungus? Analysis of the Neurospora genome sequence.</title>
        <authorList>
            <person name="Mannhaupt G."/>
            <person name="Montrone C."/>
            <person name="Haase D."/>
            <person name="Mewes H.-W."/>
            <person name="Aign V."/>
            <person name="Hoheisel J.D."/>
            <person name="Fartmann B."/>
            <person name="Nyakatura G."/>
            <person name="Kempken F."/>
            <person name="Maier J."/>
            <person name="Schulte U."/>
        </authorList>
    </citation>
    <scope>NUCLEOTIDE SEQUENCE [LARGE SCALE GENOMIC DNA]</scope>
    <source>
        <strain>ATCC 24698 / 74-OR23-1A / CBS 708.71 / DSM 1257 / FGSC 987</strain>
    </source>
</reference>
<reference key="3">
    <citation type="journal article" date="2003" name="Nature">
        <title>The genome sequence of the filamentous fungus Neurospora crassa.</title>
        <authorList>
            <person name="Galagan J.E."/>
            <person name="Calvo S.E."/>
            <person name="Borkovich K.A."/>
            <person name="Selker E.U."/>
            <person name="Read N.D."/>
            <person name="Jaffe D.B."/>
            <person name="FitzHugh W."/>
            <person name="Ma L.-J."/>
            <person name="Smirnov S."/>
            <person name="Purcell S."/>
            <person name="Rehman B."/>
            <person name="Elkins T."/>
            <person name="Engels R."/>
            <person name="Wang S."/>
            <person name="Nielsen C.B."/>
            <person name="Butler J."/>
            <person name="Endrizzi M."/>
            <person name="Qui D."/>
            <person name="Ianakiev P."/>
            <person name="Bell-Pedersen D."/>
            <person name="Nelson M.A."/>
            <person name="Werner-Washburne M."/>
            <person name="Selitrennikoff C.P."/>
            <person name="Kinsey J.A."/>
            <person name="Braun E.L."/>
            <person name="Zelter A."/>
            <person name="Schulte U."/>
            <person name="Kothe G.O."/>
            <person name="Jedd G."/>
            <person name="Mewes H.-W."/>
            <person name="Staben C."/>
            <person name="Marcotte E."/>
            <person name="Greenberg D."/>
            <person name="Roy A."/>
            <person name="Foley K."/>
            <person name="Naylor J."/>
            <person name="Stange-Thomann N."/>
            <person name="Barrett R."/>
            <person name="Gnerre S."/>
            <person name="Kamal M."/>
            <person name="Kamvysselis M."/>
            <person name="Mauceli E.W."/>
            <person name="Bielke C."/>
            <person name="Rudd S."/>
            <person name="Frishman D."/>
            <person name="Krystofova S."/>
            <person name="Rasmussen C."/>
            <person name="Metzenberg R.L."/>
            <person name="Perkins D.D."/>
            <person name="Kroken S."/>
            <person name="Cogoni C."/>
            <person name="Macino G."/>
            <person name="Catcheside D.E.A."/>
            <person name="Li W."/>
            <person name="Pratt R.J."/>
            <person name="Osmani S.A."/>
            <person name="DeSouza C.P.C."/>
            <person name="Glass N.L."/>
            <person name="Orbach M.J."/>
            <person name="Berglund J.A."/>
            <person name="Voelker R."/>
            <person name="Yarden O."/>
            <person name="Plamann M."/>
            <person name="Seiler S."/>
            <person name="Dunlap J.C."/>
            <person name="Radford A."/>
            <person name="Aramayo R."/>
            <person name="Natvig D.O."/>
            <person name="Alex L.A."/>
            <person name="Mannhaupt G."/>
            <person name="Ebbole D.J."/>
            <person name="Freitag M."/>
            <person name="Paulsen I."/>
            <person name="Sachs M.S."/>
            <person name="Lander E.S."/>
            <person name="Nusbaum C."/>
            <person name="Birren B.W."/>
        </authorList>
    </citation>
    <scope>NUCLEOTIDE SEQUENCE [LARGE SCALE GENOMIC DNA]</scope>
    <source>
        <strain>ATCC 24698 / 74-OR23-1A / CBS 708.71 / DSM 1257 / FGSC 987</strain>
    </source>
</reference>
<protein>
    <recommendedName>
        <fullName>V-type proton ATPase subunit d</fullName>
        <shortName>V-ATPase subunit d</shortName>
    </recommendedName>
    <alternativeName>
        <fullName>V-ATPase 41 kDa subunit</fullName>
    </alternativeName>
    <alternativeName>
        <fullName>Vacuolar proton pump subunit d</fullName>
    </alternativeName>
</protein>